<reference key="1">
    <citation type="journal article" date="2009" name="Appl. Environ. Microbiol.">
        <title>Rhizobium sp. strain NGR234 possesses a remarkable number of secretion systems.</title>
        <authorList>
            <person name="Schmeisser C."/>
            <person name="Liesegang H."/>
            <person name="Krysciak D."/>
            <person name="Bakkou N."/>
            <person name="Le Quere A."/>
            <person name="Wollherr A."/>
            <person name="Heinemeyer I."/>
            <person name="Morgenstern B."/>
            <person name="Pommerening-Roeser A."/>
            <person name="Flores M."/>
            <person name="Palacios R."/>
            <person name="Brenner S."/>
            <person name="Gottschalk G."/>
            <person name="Schmitz R.A."/>
            <person name="Broughton W.J."/>
            <person name="Perret X."/>
            <person name="Strittmatter A.W."/>
            <person name="Streit W.R."/>
        </authorList>
    </citation>
    <scope>NUCLEOTIDE SEQUENCE [LARGE SCALE GENOMIC DNA]</scope>
    <source>
        <strain>NBRC 101917 / NGR234</strain>
    </source>
</reference>
<sequence>MSGKHVAVLMGGFSSERPVSLSSGAACADALEAEGYRVSRVDVGRDVAAVLADLRPDIVFNALHGPFGEDGTIQGILEYLEIPYTHSGVLASALAMDKAQAKHVAKAAGIPVADALIMDRREFGNAHPMKPPYVVKPVREGSSFGVVIVKEDQSHPPQVITSSEWRYGDRVMVERYIAGRELTCGVMGDVALGVTEIIPQGHAFYDYDSKYVKGGSAHVIPAQISPNIYQKIQSLAVKAHQAIGCRGVSRSDFRFDDRGEGELIWLEINTQPGMTPTSLVPEMAQHAGLQFGEFLRWMVEDASCLR</sequence>
<evidence type="ECO:0000250" key="1"/>
<evidence type="ECO:0000255" key="2">
    <source>
        <dbReference type="HAMAP-Rule" id="MF_00047"/>
    </source>
</evidence>
<dbReference type="EC" id="6.3.2.4" evidence="2"/>
<dbReference type="EMBL" id="CP001389">
    <property type="protein sequence ID" value="ACP25867.1"/>
    <property type="molecule type" value="Genomic_DNA"/>
</dbReference>
<dbReference type="RefSeq" id="WP_012708630.1">
    <property type="nucleotide sequence ID" value="NC_012587.1"/>
</dbReference>
<dbReference type="RefSeq" id="YP_002826620.1">
    <property type="nucleotide sequence ID" value="NC_012587.1"/>
</dbReference>
<dbReference type="SMR" id="C3MEM6"/>
<dbReference type="STRING" id="394.NGR_c21040"/>
<dbReference type="KEGG" id="rhi:NGR_c21040"/>
<dbReference type="PATRIC" id="fig|394.7.peg.4929"/>
<dbReference type="eggNOG" id="COG1181">
    <property type="taxonomic scope" value="Bacteria"/>
</dbReference>
<dbReference type="HOGENOM" id="CLU_039268_1_1_5"/>
<dbReference type="OrthoDB" id="9813261at2"/>
<dbReference type="UniPathway" id="UPA00219"/>
<dbReference type="Proteomes" id="UP000001054">
    <property type="component" value="Chromosome"/>
</dbReference>
<dbReference type="GO" id="GO:0005737">
    <property type="term" value="C:cytoplasm"/>
    <property type="evidence" value="ECO:0007669"/>
    <property type="project" value="UniProtKB-SubCell"/>
</dbReference>
<dbReference type="GO" id="GO:0005524">
    <property type="term" value="F:ATP binding"/>
    <property type="evidence" value="ECO:0007669"/>
    <property type="project" value="UniProtKB-KW"/>
</dbReference>
<dbReference type="GO" id="GO:0008716">
    <property type="term" value="F:D-alanine-D-alanine ligase activity"/>
    <property type="evidence" value="ECO:0007669"/>
    <property type="project" value="UniProtKB-UniRule"/>
</dbReference>
<dbReference type="GO" id="GO:0046872">
    <property type="term" value="F:metal ion binding"/>
    <property type="evidence" value="ECO:0007669"/>
    <property type="project" value="UniProtKB-KW"/>
</dbReference>
<dbReference type="GO" id="GO:0071555">
    <property type="term" value="P:cell wall organization"/>
    <property type="evidence" value="ECO:0007669"/>
    <property type="project" value="UniProtKB-KW"/>
</dbReference>
<dbReference type="GO" id="GO:0009252">
    <property type="term" value="P:peptidoglycan biosynthetic process"/>
    <property type="evidence" value="ECO:0007669"/>
    <property type="project" value="UniProtKB-UniRule"/>
</dbReference>
<dbReference type="GO" id="GO:0008360">
    <property type="term" value="P:regulation of cell shape"/>
    <property type="evidence" value="ECO:0007669"/>
    <property type="project" value="UniProtKB-KW"/>
</dbReference>
<dbReference type="Gene3D" id="3.40.50.20">
    <property type="match status" value="1"/>
</dbReference>
<dbReference type="Gene3D" id="3.30.1490.20">
    <property type="entry name" value="ATP-grasp fold, A domain"/>
    <property type="match status" value="1"/>
</dbReference>
<dbReference type="Gene3D" id="3.30.470.20">
    <property type="entry name" value="ATP-grasp fold, B domain"/>
    <property type="match status" value="1"/>
</dbReference>
<dbReference type="HAMAP" id="MF_00047">
    <property type="entry name" value="Dala_Dala_lig"/>
    <property type="match status" value="1"/>
</dbReference>
<dbReference type="InterPro" id="IPR011761">
    <property type="entry name" value="ATP-grasp"/>
</dbReference>
<dbReference type="InterPro" id="IPR013815">
    <property type="entry name" value="ATP_grasp_subdomain_1"/>
</dbReference>
<dbReference type="InterPro" id="IPR000291">
    <property type="entry name" value="D-Ala_lig_Van_CS"/>
</dbReference>
<dbReference type="InterPro" id="IPR005905">
    <property type="entry name" value="D_ala_D_ala"/>
</dbReference>
<dbReference type="InterPro" id="IPR011095">
    <property type="entry name" value="Dala_Dala_lig_C"/>
</dbReference>
<dbReference type="InterPro" id="IPR011127">
    <property type="entry name" value="Dala_Dala_lig_N"/>
</dbReference>
<dbReference type="InterPro" id="IPR016185">
    <property type="entry name" value="PreATP-grasp_dom_sf"/>
</dbReference>
<dbReference type="NCBIfam" id="TIGR01205">
    <property type="entry name" value="D_ala_D_alaTIGR"/>
    <property type="match status" value="1"/>
</dbReference>
<dbReference type="NCBIfam" id="NF002378">
    <property type="entry name" value="PRK01372.1"/>
    <property type="match status" value="1"/>
</dbReference>
<dbReference type="PANTHER" id="PTHR23132">
    <property type="entry name" value="D-ALANINE--D-ALANINE LIGASE"/>
    <property type="match status" value="1"/>
</dbReference>
<dbReference type="PANTHER" id="PTHR23132:SF23">
    <property type="entry name" value="D-ALANINE--D-ALANINE LIGASE B"/>
    <property type="match status" value="1"/>
</dbReference>
<dbReference type="Pfam" id="PF07478">
    <property type="entry name" value="Dala_Dala_lig_C"/>
    <property type="match status" value="1"/>
</dbReference>
<dbReference type="Pfam" id="PF01820">
    <property type="entry name" value="Dala_Dala_lig_N"/>
    <property type="match status" value="1"/>
</dbReference>
<dbReference type="PIRSF" id="PIRSF039102">
    <property type="entry name" value="Ddl/VanB"/>
    <property type="match status" value="1"/>
</dbReference>
<dbReference type="SUPFAM" id="SSF56059">
    <property type="entry name" value="Glutathione synthetase ATP-binding domain-like"/>
    <property type="match status" value="1"/>
</dbReference>
<dbReference type="SUPFAM" id="SSF52440">
    <property type="entry name" value="PreATP-grasp domain"/>
    <property type="match status" value="1"/>
</dbReference>
<dbReference type="PROSITE" id="PS50975">
    <property type="entry name" value="ATP_GRASP"/>
    <property type="match status" value="1"/>
</dbReference>
<dbReference type="PROSITE" id="PS00843">
    <property type="entry name" value="DALA_DALA_LIGASE_1"/>
    <property type="match status" value="1"/>
</dbReference>
<dbReference type="PROSITE" id="PS00844">
    <property type="entry name" value="DALA_DALA_LIGASE_2"/>
    <property type="match status" value="1"/>
</dbReference>
<organism>
    <name type="scientific">Sinorhizobium fredii (strain NBRC 101917 / NGR234)</name>
    <dbReference type="NCBI Taxonomy" id="394"/>
    <lineage>
        <taxon>Bacteria</taxon>
        <taxon>Pseudomonadati</taxon>
        <taxon>Pseudomonadota</taxon>
        <taxon>Alphaproteobacteria</taxon>
        <taxon>Hyphomicrobiales</taxon>
        <taxon>Rhizobiaceae</taxon>
        <taxon>Sinorhizobium/Ensifer group</taxon>
        <taxon>Sinorhizobium</taxon>
    </lineage>
</organism>
<keyword id="KW-0067">ATP-binding</keyword>
<keyword id="KW-0133">Cell shape</keyword>
<keyword id="KW-0961">Cell wall biogenesis/degradation</keyword>
<keyword id="KW-0963">Cytoplasm</keyword>
<keyword id="KW-0436">Ligase</keyword>
<keyword id="KW-0460">Magnesium</keyword>
<keyword id="KW-0464">Manganese</keyword>
<keyword id="KW-0479">Metal-binding</keyword>
<keyword id="KW-0547">Nucleotide-binding</keyword>
<keyword id="KW-0573">Peptidoglycan synthesis</keyword>
<keyword id="KW-1185">Reference proteome</keyword>
<gene>
    <name evidence="2" type="primary">ddl</name>
    <name type="ordered locus">NGR_c21040</name>
</gene>
<comment type="function">
    <text evidence="2">Cell wall formation.</text>
</comment>
<comment type="catalytic activity">
    <reaction evidence="2">
        <text>2 D-alanine + ATP = D-alanyl-D-alanine + ADP + phosphate + H(+)</text>
        <dbReference type="Rhea" id="RHEA:11224"/>
        <dbReference type="ChEBI" id="CHEBI:15378"/>
        <dbReference type="ChEBI" id="CHEBI:30616"/>
        <dbReference type="ChEBI" id="CHEBI:43474"/>
        <dbReference type="ChEBI" id="CHEBI:57416"/>
        <dbReference type="ChEBI" id="CHEBI:57822"/>
        <dbReference type="ChEBI" id="CHEBI:456216"/>
        <dbReference type="EC" id="6.3.2.4"/>
    </reaction>
</comment>
<comment type="cofactor">
    <cofactor evidence="1">
        <name>Mg(2+)</name>
        <dbReference type="ChEBI" id="CHEBI:18420"/>
    </cofactor>
    <cofactor evidence="1">
        <name>Mn(2+)</name>
        <dbReference type="ChEBI" id="CHEBI:29035"/>
    </cofactor>
    <text evidence="1">Binds 2 magnesium or manganese ions per subunit.</text>
</comment>
<comment type="pathway">
    <text evidence="2">Cell wall biogenesis; peptidoglycan biosynthesis.</text>
</comment>
<comment type="subcellular location">
    <subcellularLocation>
        <location evidence="2">Cytoplasm</location>
    </subcellularLocation>
</comment>
<comment type="similarity">
    <text evidence="2">Belongs to the D-alanine--D-alanine ligase family.</text>
</comment>
<name>DDL_SINFN</name>
<feature type="chain" id="PRO_1000189742" description="D-alanine--D-alanine ligase">
    <location>
        <begin position="1"/>
        <end position="306"/>
    </location>
</feature>
<feature type="domain" description="ATP-grasp" evidence="2">
    <location>
        <begin position="102"/>
        <end position="300"/>
    </location>
</feature>
<feature type="binding site" evidence="2">
    <location>
        <begin position="128"/>
        <end position="183"/>
    </location>
    <ligand>
        <name>ATP</name>
        <dbReference type="ChEBI" id="CHEBI:30616"/>
    </ligand>
</feature>
<feature type="binding site" evidence="2">
    <location>
        <position position="252"/>
    </location>
    <ligand>
        <name>Mg(2+)</name>
        <dbReference type="ChEBI" id="CHEBI:18420"/>
        <label>1</label>
    </ligand>
</feature>
<feature type="binding site" evidence="2">
    <location>
        <position position="267"/>
    </location>
    <ligand>
        <name>Mg(2+)</name>
        <dbReference type="ChEBI" id="CHEBI:18420"/>
        <label>1</label>
    </ligand>
</feature>
<feature type="binding site" evidence="2">
    <location>
        <position position="267"/>
    </location>
    <ligand>
        <name>Mg(2+)</name>
        <dbReference type="ChEBI" id="CHEBI:18420"/>
        <label>2</label>
    </ligand>
</feature>
<feature type="binding site" evidence="2">
    <location>
        <position position="269"/>
    </location>
    <ligand>
        <name>Mg(2+)</name>
        <dbReference type="ChEBI" id="CHEBI:18420"/>
        <label>2</label>
    </ligand>
</feature>
<protein>
    <recommendedName>
        <fullName evidence="2">D-alanine--D-alanine ligase</fullName>
        <ecNumber evidence="2">6.3.2.4</ecNumber>
    </recommendedName>
    <alternativeName>
        <fullName evidence="2">D-Ala-D-Ala ligase</fullName>
    </alternativeName>
    <alternativeName>
        <fullName evidence="2">D-alanylalanine synthetase</fullName>
    </alternativeName>
</protein>
<accession>C3MEM6</accession>
<proteinExistence type="inferred from homology"/>